<accession>Q4P8F6</accession>
<accession>A0A0D1E1P2</accession>
<reference key="1">
    <citation type="journal article" date="2006" name="Nature">
        <title>Insights from the genome of the biotrophic fungal plant pathogen Ustilago maydis.</title>
        <authorList>
            <person name="Kaemper J."/>
            <person name="Kahmann R."/>
            <person name="Boelker M."/>
            <person name="Ma L.-J."/>
            <person name="Brefort T."/>
            <person name="Saville B.J."/>
            <person name="Banuett F."/>
            <person name="Kronstad J.W."/>
            <person name="Gold S.E."/>
            <person name="Mueller O."/>
            <person name="Perlin M.H."/>
            <person name="Woesten H.A.B."/>
            <person name="de Vries R."/>
            <person name="Ruiz-Herrera J."/>
            <person name="Reynaga-Pena C.G."/>
            <person name="Snetselaar K."/>
            <person name="McCann M."/>
            <person name="Perez-Martin J."/>
            <person name="Feldbruegge M."/>
            <person name="Basse C.W."/>
            <person name="Steinberg G."/>
            <person name="Ibeas J.I."/>
            <person name="Holloman W."/>
            <person name="Guzman P."/>
            <person name="Farman M.L."/>
            <person name="Stajich J.E."/>
            <person name="Sentandreu R."/>
            <person name="Gonzalez-Prieto J.M."/>
            <person name="Kennell J.C."/>
            <person name="Molina L."/>
            <person name="Schirawski J."/>
            <person name="Mendoza-Mendoza A."/>
            <person name="Greilinger D."/>
            <person name="Muench K."/>
            <person name="Roessel N."/>
            <person name="Scherer M."/>
            <person name="Vranes M."/>
            <person name="Ladendorf O."/>
            <person name="Vincon V."/>
            <person name="Fuchs U."/>
            <person name="Sandrock B."/>
            <person name="Meng S."/>
            <person name="Ho E.C.H."/>
            <person name="Cahill M.J."/>
            <person name="Boyce K.J."/>
            <person name="Klose J."/>
            <person name="Klosterman S.J."/>
            <person name="Deelstra H.J."/>
            <person name="Ortiz-Castellanos L."/>
            <person name="Li W."/>
            <person name="Sanchez-Alonso P."/>
            <person name="Schreier P.H."/>
            <person name="Haeuser-Hahn I."/>
            <person name="Vaupel M."/>
            <person name="Koopmann E."/>
            <person name="Friedrich G."/>
            <person name="Voss H."/>
            <person name="Schlueter T."/>
            <person name="Margolis J."/>
            <person name="Platt D."/>
            <person name="Swimmer C."/>
            <person name="Gnirke A."/>
            <person name="Chen F."/>
            <person name="Vysotskaia V."/>
            <person name="Mannhaupt G."/>
            <person name="Gueldener U."/>
            <person name="Muensterkoetter M."/>
            <person name="Haase D."/>
            <person name="Oesterheld M."/>
            <person name="Mewes H.-W."/>
            <person name="Mauceli E.W."/>
            <person name="DeCaprio D."/>
            <person name="Wade C.M."/>
            <person name="Butler J."/>
            <person name="Young S.K."/>
            <person name="Jaffe D.B."/>
            <person name="Calvo S.E."/>
            <person name="Nusbaum C."/>
            <person name="Galagan J.E."/>
            <person name="Birren B.W."/>
        </authorList>
    </citation>
    <scope>NUCLEOTIDE SEQUENCE [LARGE SCALE GENOMIC DNA]</scope>
    <source>
        <strain>DSM 14603 / FGSC 9021 / UM521</strain>
    </source>
</reference>
<reference key="2">
    <citation type="submission" date="2014-09" db="EMBL/GenBank/DDBJ databases">
        <authorList>
            <person name="Gueldener U."/>
            <person name="Muensterkoetter M."/>
            <person name="Walter M.C."/>
            <person name="Mannhaupt G."/>
            <person name="Kahmann R."/>
        </authorList>
    </citation>
    <scope>GENOME REANNOTATION</scope>
    <source>
        <strain>DSM 14603 / FGSC 9021 / UM521</strain>
    </source>
</reference>
<organism>
    <name type="scientific">Mycosarcoma maydis</name>
    <name type="common">Corn smut fungus</name>
    <name type="synonym">Ustilago maydis</name>
    <dbReference type="NCBI Taxonomy" id="5270"/>
    <lineage>
        <taxon>Eukaryota</taxon>
        <taxon>Fungi</taxon>
        <taxon>Dikarya</taxon>
        <taxon>Basidiomycota</taxon>
        <taxon>Ustilaginomycotina</taxon>
        <taxon>Ustilaginomycetes</taxon>
        <taxon>Ustilaginales</taxon>
        <taxon>Ustilaginaceae</taxon>
        <taxon>Mycosarcoma</taxon>
    </lineage>
</organism>
<protein>
    <recommendedName>
        <fullName evidence="1">Pentafunctional AROM polypeptide</fullName>
    </recommendedName>
    <domain>
        <recommendedName>
            <fullName evidence="1">3-dehydroquinate synthase</fullName>
            <shortName evidence="1">DHQS</shortName>
            <ecNumber evidence="1">4.2.3.4</ecNumber>
        </recommendedName>
    </domain>
    <domain>
        <recommendedName>
            <fullName evidence="1">3-phosphoshikimate 1-carboxyvinyltransferase</fullName>
            <ecNumber evidence="1">2.5.1.19</ecNumber>
        </recommendedName>
        <alternativeName>
            <fullName evidence="1">5-enolpyruvylshikimate-3-phosphate synthase</fullName>
            <shortName evidence="1">EPSP synthase</shortName>
            <shortName evidence="1">EPSPS</shortName>
        </alternativeName>
    </domain>
    <domain>
        <recommendedName>
            <fullName evidence="1">Shikimate kinase</fullName>
            <shortName evidence="1">SK</shortName>
            <ecNumber evidence="1">2.7.1.71</ecNumber>
        </recommendedName>
    </domain>
    <domain>
        <recommendedName>
            <fullName evidence="1">3-dehydroquinate dehydratase</fullName>
            <shortName evidence="1">3-dehydroquinase</shortName>
            <ecNumber evidence="1">4.2.1.10</ecNumber>
        </recommendedName>
    </domain>
    <domain>
        <recommendedName>
            <fullName evidence="1">Shikimate dehydrogenase</fullName>
            <ecNumber evidence="1">1.1.1.25</ecNumber>
        </recommendedName>
    </domain>
</protein>
<keyword id="KW-0028">Amino-acid biosynthesis</keyword>
<keyword id="KW-0057">Aromatic amino acid biosynthesis</keyword>
<keyword id="KW-0067">ATP-binding</keyword>
<keyword id="KW-0963">Cytoplasm</keyword>
<keyword id="KW-0418">Kinase</keyword>
<keyword id="KW-0456">Lyase</keyword>
<keyword id="KW-0479">Metal-binding</keyword>
<keyword id="KW-0511">Multifunctional enzyme</keyword>
<keyword id="KW-0521">NADP</keyword>
<keyword id="KW-0547">Nucleotide-binding</keyword>
<keyword id="KW-0560">Oxidoreductase</keyword>
<keyword id="KW-1185">Reference proteome</keyword>
<keyword id="KW-0808">Transferase</keyword>
<keyword id="KW-0862">Zinc</keyword>
<evidence type="ECO:0000255" key="1">
    <source>
        <dbReference type="HAMAP-Rule" id="MF_03143"/>
    </source>
</evidence>
<evidence type="ECO:0000256" key="2">
    <source>
        <dbReference type="SAM" id="MobiDB-lite"/>
    </source>
</evidence>
<dbReference type="EC" id="4.2.3.4" evidence="1"/>
<dbReference type="EC" id="2.5.1.19" evidence="1"/>
<dbReference type="EC" id="2.7.1.71" evidence="1"/>
<dbReference type="EC" id="4.2.1.10" evidence="1"/>
<dbReference type="EC" id="1.1.1.25" evidence="1"/>
<dbReference type="EMBL" id="CM003148">
    <property type="protein sequence ID" value="KIS68520.1"/>
    <property type="molecule type" value="Genomic_DNA"/>
</dbReference>
<dbReference type="RefSeq" id="XP_011390030.1">
    <property type="nucleotide sequence ID" value="XM_011391728.1"/>
</dbReference>
<dbReference type="SMR" id="Q4P8F6"/>
<dbReference type="FunCoup" id="Q4P8F6">
    <property type="interactions" value="98"/>
</dbReference>
<dbReference type="STRING" id="237631.Q4P8F6"/>
<dbReference type="EnsemblFungi" id="KIS68520">
    <property type="protein sequence ID" value="KIS68520"/>
    <property type="gene ID" value="UMAG_03607"/>
</dbReference>
<dbReference type="GeneID" id="23564017"/>
<dbReference type="KEGG" id="uma:UMAG_03607"/>
<dbReference type="VEuPathDB" id="FungiDB:UMAG_03607"/>
<dbReference type="eggNOG" id="KOG0692">
    <property type="taxonomic scope" value="Eukaryota"/>
</dbReference>
<dbReference type="HOGENOM" id="CLU_001201_1_2_1"/>
<dbReference type="InParanoid" id="Q4P8F6"/>
<dbReference type="OMA" id="SWANMSW"/>
<dbReference type="OrthoDB" id="197068at2759"/>
<dbReference type="UniPathway" id="UPA00053">
    <property type="reaction ID" value="UER00085"/>
</dbReference>
<dbReference type="UniPathway" id="UPA00053">
    <property type="reaction ID" value="UER00086"/>
</dbReference>
<dbReference type="UniPathway" id="UPA00053">
    <property type="reaction ID" value="UER00087"/>
</dbReference>
<dbReference type="UniPathway" id="UPA00053">
    <property type="reaction ID" value="UER00088"/>
</dbReference>
<dbReference type="UniPathway" id="UPA00053">
    <property type="reaction ID" value="UER00089"/>
</dbReference>
<dbReference type="Proteomes" id="UP000000561">
    <property type="component" value="Chromosome 9"/>
</dbReference>
<dbReference type="GO" id="GO:0005737">
    <property type="term" value="C:cytoplasm"/>
    <property type="evidence" value="ECO:0007669"/>
    <property type="project" value="UniProtKB-SubCell"/>
</dbReference>
<dbReference type="GO" id="GO:0003855">
    <property type="term" value="F:3-dehydroquinate dehydratase activity"/>
    <property type="evidence" value="ECO:0007669"/>
    <property type="project" value="UniProtKB-UniRule"/>
</dbReference>
<dbReference type="GO" id="GO:0003856">
    <property type="term" value="F:3-dehydroquinate synthase activity"/>
    <property type="evidence" value="ECO:0007669"/>
    <property type="project" value="UniProtKB-UniRule"/>
</dbReference>
<dbReference type="GO" id="GO:0003866">
    <property type="term" value="F:3-phosphoshikimate 1-carboxyvinyltransferase activity"/>
    <property type="evidence" value="ECO:0000318"/>
    <property type="project" value="GO_Central"/>
</dbReference>
<dbReference type="GO" id="GO:0005524">
    <property type="term" value="F:ATP binding"/>
    <property type="evidence" value="ECO:0007669"/>
    <property type="project" value="UniProtKB-UniRule"/>
</dbReference>
<dbReference type="GO" id="GO:0046872">
    <property type="term" value="F:metal ion binding"/>
    <property type="evidence" value="ECO:0007669"/>
    <property type="project" value="UniProtKB-UniRule"/>
</dbReference>
<dbReference type="GO" id="GO:0004764">
    <property type="term" value="F:shikimate 3-dehydrogenase (NADP+) activity"/>
    <property type="evidence" value="ECO:0007669"/>
    <property type="project" value="UniProtKB-UniRule"/>
</dbReference>
<dbReference type="GO" id="GO:0004765">
    <property type="term" value="F:shikimate kinase activity"/>
    <property type="evidence" value="ECO:0007669"/>
    <property type="project" value="UniProtKB-UniRule"/>
</dbReference>
<dbReference type="GO" id="GO:0008652">
    <property type="term" value="P:amino acid biosynthetic process"/>
    <property type="evidence" value="ECO:0007669"/>
    <property type="project" value="UniProtKB-KW"/>
</dbReference>
<dbReference type="GO" id="GO:0009073">
    <property type="term" value="P:aromatic amino acid family biosynthetic process"/>
    <property type="evidence" value="ECO:0007669"/>
    <property type="project" value="UniProtKB-UniRule"/>
</dbReference>
<dbReference type="GO" id="GO:0009423">
    <property type="term" value="P:chorismate biosynthetic process"/>
    <property type="evidence" value="ECO:0000318"/>
    <property type="project" value="GO_Central"/>
</dbReference>
<dbReference type="CDD" id="cd00502">
    <property type="entry name" value="DHQase_I"/>
    <property type="match status" value="1"/>
</dbReference>
<dbReference type="CDD" id="cd08195">
    <property type="entry name" value="DHQS"/>
    <property type="match status" value="1"/>
</dbReference>
<dbReference type="CDD" id="cd01556">
    <property type="entry name" value="EPSP_synthase"/>
    <property type="match status" value="1"/>
</dbReference>
<dbReference type="CDD" id="cd01065">
    <property type="entry name" value="NAD_bind_Shikimate_DH"/>
    <property type="match status" value="1"/>
</dbReference>
<dbReference type="CDD" id="cd00464">
    <property type="entry name" value="SK"/>
    <property type="match status" value="1"/>
</dbReference>
<dbReference type="FunFam" id="1.20.1090.10:FF:000007">
    <property type="entry name" value="Pentafunctional AROM polypeptide"/>
    <property type="match status" value="1"/>
</dbReference>
<dbReference type="FunFam" id="3.20.20.70:FF:000135">
    <property type="entry name" value="Pentafunctional AROM polypeptide"/>
    <property type="match status" value="1"/>
</dbReference>
<dbReference type="FunFam" id="3.40.50.1970:FF:000007">
    <property type="entry name" value="Pentafunctional AROM polypeptide"/>
    <property type="match status" value="1"/>
</dbReference>
<dbReference type="FunFam" id="3.40.50.300:FF:001256">
    <property type="entry name" value="Pentafunctional AROM polypeptide"/>
    <property type="match status" value="1"/>
</dbReference>
<dbReference type="FunFam" id="3.65.10.10:FF:000007">
    <property type="entry name" value="Pentafunctional AROM polypeptide"/>
    <property type="match status" value="1"/>
</dbReference>
<dbReference type="FunFam" id="3.65.10.10:FF:000008">
    <property type="entry name" value="Pentafunctional AROM polypeptide"/>
    <property type="match status" value="1"/>
</dbReference>
<dbReference type="Gene3D" id="3.40.50.1970">
    <property type="match status" value="1"/>
</dbReference>
<dbReference type="Gene3D" id="3.20.20.70">
    <property type="entry name" value="Aldolase class I"/>
    <property type="match status" value="1"/>
</dbReference>
<dbReference type="Gene3D" id="1.20.1090.10">
    <property type="entry name" value="Dehydroquinate synthase-like - alpha domain"/>
    <property type="match status" value="1"/>
</dbReference>
<dbReference type="Gene3D" id="3.65.10.10">
    <property type="entry name" value="Enolpyruvate transferase domain"/>
    <property type="match status" value="2"/>
</dbReference>
<dbReference type="Gene3D" id="3.40.50.10860">
    <property type="entry name" value="Leucine Dehydrogenase, chain A, domain 1"/>
    <property type="match status" value="1"/>
</dbReference>
<dbReference type="Gene3D" id="3.40.50.720">
    <property type="entry name" value="NAD(P)-binding Rossmann-like Domain"/>
    <property type="match status" value="1"/>
</dbReference>
<dbReference type="Gene3D" id="3.40.50.300">
    <property type="entry name" value="P-loop containing nucleotide triphosphate hydrolases"/>
    <property type="match status" value="1"/>
</dbReference>
<dbReference type="HAMAP" id="MF_00210">
    <property type="entry name" value="EPSP_synth"/>
    <property type="match status" value="1"/>
</dbReference>
<dbReference type="HAMAP" id="MF_03143">
    <property type="entry name" value="Pentafunct_AroM"/>
    <property type="match status" value="1"/>
</dbReference>
<dbReference type="HAMAP" id="MF_00109">
    <property type="entry name" value="Shikimate_kinase"/>
    <property type="match status" value="1"/>
</dbReference>
<dbReference type="InterPro" id="IPR013785">
    <property type="entry name" value="Aldolase_TIM"/>
</dbReference>
<dbReference type="InterPro" id="IPR046346">
    <property type="entry name" value="Aminoacid_DH-like_N_sf"/>
</dbReference>
<dbReference type="InterPro" id="IPR016037">
    <property type="entry name" value="DHQ_synth_AroB"/>
</dbReference>
<dbReference type="InterPro" id="IPR030960">
    <property type="entry name" value="DHQS/DOIS_N"/>
</dbReference>
<dbReference type="InterPro" id="IPR056179">
    <property type="entry name" value="DHQS_C"/>
</dbReference>
<dbReference type="InterPro" id="IPR001381">
    <property type="entry name" value="DHquinase_I"/>
</dbReference>
<dbReference type="InterPro" id="IPR001986">
    <property type="entry name" value="Enolpyruvate_Tfrase_dom"/>
</dbReference>
<dbReference type="InterPro" id="IPR036968">
    <property type="entry name" value="Enolpyruvate_Tfrase_sf"/>
</dbReference>
<dbReference type="InterPro" id="IPR006264">
    <property type="entry name" value="EPSP_synthase"/>
</dbReference>
<dbReference type="InterPro" id="IPR023193">
    <property type="entry name" value="EPSP_synthase_CS"/>
</dbReference>
<dbReference type="InterPro" id="IPR036291">
    <property type="entry name" value="NAD(P)-bd_dom_sf"/>
</dbReference>
<dbReference type="InterPro" id="IPR027417">
    <property type="entry name" value="P-loop_NTPase"/>
</dbReference>
<dbReference type="InterPro" id="IPR008289">
    <property type="entry name" value="Pentafunct_AroM"/>
</dbReference>
<dbReference type="InterPro" id="IPR013792">
    <property type="entry name" value="RNA3'P_cycl/enolpyr_Trfase_a/b"/>
</dbReference>
<dbReference type="InterPro" id="IPR041121">
    <property type="entry name" value="SDH_C"/>
</dbReference>
<dbReference type="InterPro" id="IPR031322">
    <property type="entry name" value="Shikimate/glucono_kinase"/>
</dbReference>
<dbReference type="InterPro" id="IPR013708">
    <property type="entry name" value="Shikimate_DH-bd_N"/>
</dbReference>
<dbReference type="InterPro" id="IPR010110">
    <property type="entry name" value="Shikimate_DH_AroM-type"/>
</dbReference>
<dbReference type="InterPro" id="IPR000623">
    <property type="entry name" value="Shikimate_kinase/TSH1"/>
</dbReference>
<dbReference type="InterPro" id="IPR023000">
    <property type="entry name" value="Shikimate_kinase_CS"/>
</dbReference>
<dbReference type="InterPro" id="IPR006151">
    <property type="entry name" value="Shikm_DH/Glu-tRNA_Rdtase"/>
</dbReference>
<dbReference type="NCBIfam" id="TIGR01356">
    <property type="entry name" value="aroA"/>
    <property type="match status" value="1"/>
</dbReference>
<dbReference type="NCBIfam" id="TIGR01357">
    <property type="entry name" value="aroB"/>
    <property type="match status" value="1"/>
</dbReference>
<dbReference type="NCBIfam" id="TIGR01093">
    <property type="entry name" value="aroD"/>
    <property type="match status" value="1"/>
</dbReference>
<dbReference type="NCBIfam" id="TIGR01809">
    <property type="entry name" value="Shik-DH-AROM"/>
    <property type="match status" value="1"/>
</dbReference>
<dbReference type="PANTHER" id="PTHR21090">
    <property type="entry name" value="AROM/DEHYDROQUINATE SYNTHASE"/>
    <property type="match status" value="1"/>
</dbReference>
<dbReference type="PANTHER" id="PTHR21090:SF5">
    <property type="entry name" value="PENTAFUNCTIONAL AROM POLYPEPTIDE"/>
    <property type="match status" value="1"/>
</dbReference>
<dbReference type="Pfam" id="PF01761">
    <property type="entry name" value="DHQ_synthase"/>
    <property type="match status" value="1"/>
</dbReference>
<dbReference type="Pfam" id="PF24621">
    <property type="entry name" value="DHQS_C"/>
    <property type="match status" value="1"/>
</dbReference>
<dbReference type="Pfam" id="PF01487">
    <property type="entry name" value="DHquinase_I"/>
    <property type="match status" value="1"/>
</dbReference>
<dbReference type="Pfam" id="PF00275">
    <property type="entry name" value="EPSP_synthase"/>
    <property type="match status" value="1"/>
</dbReference>
<dbReference type="Pfam" id="PF18317">
    <property type="entry name" value="SDH_C"/>
    <property type="match status" value="1"/>
</dbReference>
<dbReference type="Pfam" id="PF01488">
    <property type="entry name" value="Shikimate_DH"/>
    <property type="match status" value="1"/>
</dbReference>
<dbReference type="Pfam" id="PF08501">
    <property type="entry name" value="Shikimate_dh_N"/>
    <property type="match status" value="1"/>
</dbReference>
<dbReference type="Pfam" id="PF01202">
    <property type="entry name" value="SKI"/>
    <property type="match status" value="1"/>
</dbReference>
<dbReference type="PIRSF" id="PIRSF000514">
    <property type="entry name" value="Pentafunct_AroM"/>
    <property type="match status" value="1"/>
</dbReference>
<dbReference type="PRINTS" id="PR01100">
    <property type="entry name" value="SHIKIMTKNASE"/>
</dbReference>
<dbReference type="SUPFAM" id="SSF51569">
    <property type="entry name" value="Aldolase"/>
    <property type="match status" value="1"/>
</dbReference>
<dbReference type="SUPFAM" id="SSF53223">
    <property type="entry name" value="Aminoacid dehydrogenase-like, N-terminal domain"/>
    <property type="match status" value="1"/>
</dbReference>
<dbReference type="SUPFAM" id="SSF56796">
    <property type="entry name" value="Dehydroquinate synthase-like"/>
    <property type="match status" value="1"/>
</dbReference>
<dbReference type="SUPFAM" id="SSF55205">
    <property type="entry name" value="EPT/RTPC-like"/>
    <property type="match status" value="1"/>
</dbReference>
<dbReference type="SUPFAM" id="SSF51735">
    <property type="entry name" value="NAD(P)-binding Rossmann-fold domains"/>
    <property type="match status" value="1"/>
</dbReference>
<dbReference type="SUPFAM" id="SSF52540">
    <property type="entry name" value="P-loop containing nucleoside triphosphate hydrolases"/>
    <property type="match status" value="1"/>
</dbReference>
<dbReference type="PROSITE" id="PS00104">
    <property type="entry name" value="EPSP_SYNTHASE_1"/>
    <property type="match status" value="1"/>
</dbReference>
<dbReference type="PROSITE" id="PS00885">
    <property type="entry name" value="EPSP_SYNTHASE_2"/>
    <property type="match status" value="1"/>
</dbReference>
<dbReference type="PROSITE" id="PS01128">
    <property type="entry name" value="SHIKIMATE_KINASE"/>
    <property type="match status" value="1"/>
</dbReference>
<sequence>MTSTASAQQPVLRTKTPSYHAPPSTDPLSGATIHTLRCLDTPIHLGYHLIPHIAKTLLSTLPSSTYVLITDQNLEARCSVTTAFRREFEKAAVHLSSSHSWRLLTKVIPPGEASKSRDGKNAIEDWMFEHRVTRDAVVLAVGGGVIGDLVGFVAATFMRGLKFVQIPTTLLAMVDSAVGGKTAIDHPLGKNLIGSFHQPNYVFIDAAWLKTLPVREFSNGMAEVVKTAAIWDPIDFAKLESSAPAIRSAVLGPFAKDAPLDQGRTLETRTESQSLLLDVIRGSVGVKAHIVTIDEKETGLRNLVNFGHTIGHAIEAVLTPEMLHGECISIGMILEAEVARYMHGLSQVAIGRLTRCLKEYDLPVSLSDSRVTRLAKSLDVTVDRLLDIMKVDKKNSGTNKKIVLLSSIGDTVQNMASTVSDHIIRRVLSLAATVTPIHEQPNKPKVTLSTPGSKSISNRALVLAALATNTCRLRNMLHSDDTQVMMAGLHDLQAARFEFEDGGETIVVHGNAGALARPANDKQIYLQNAGTAARFMATVVSLVHNDGNQHPVVITGNKRMKERPIAALVDALRSNGTSIDYLEGHGCLPLAVKGTTHGFKGGKIQLSATISSQYVSSILLCAPYAAEQVVLELVGGQVISQLYIDMTIAMMATFGIKVERLLDPTTGRPSNTYRIPKGHYVSPDVYDIESDASSATYPLAIAAITGTECTVPNIGSASLQGDARFAKEVLEPMGCTVVQTATSTTVIGPKLGQLRQIGLVDMEPMTDAFLTASVLLAVAAHSPANGSTSNARPSTRITGIANQRVKECNRIRAMMDELAKFGVNTKEHDDGLEIFGIDYRQLHANVRVHCYDDHRVAMAFSVLASLAPGAILEEKRCVEKTWPNWWDDLERKLGIRVHGVDPECSPSLCISPSHFTKASAASTNGKPPTCLSQLTCGKALTPRKYSKHATIICIGMRASGKTFLGAIGAAALSRTFIDADVVFNEKLGAKDGLGDFVREHGWPAFRQKELEILQELIARHPSGALISLGGGVVETEACRQILAEYAQTKGPVIYIVRDTNAIVKFLATSDRPAYGEPVMDVYRRRNPWFSECSSAELVSYSEGESLAIQPCAMNVPDPSFTIQKKFGLETEVARFFKFVVGQDTNQIRDLVVDSRKGGRRTYFLSLTFPDVVPKLELIRSMESGSDALEFRADLLNPSGQPVTTPQIPPTEYVKNQLAALRHRTSLPIVFTVRTHSQGGMFPDGKQHEYFELISLALRHACEYIDLELGWDDDLLSAVVQAKGNSQIIASWHDWSGRLDWESESTAKIYEKACRFGDIAKIIGKATTMEDNYSLERFRAKVSATATKPLLAVNMGSVGQLSRIVNPVFTPITHEAMPFKAAPGQLSFRQVQTALSLIGQADARRFALFGSPIGHSLSPLLHNTGFAALGLPHQYELLESTEINDAVAAFVRSPDFGGASVTIPHKLNIIKLLDEVTDEAKTIGAVNTIIPIRDAQGVVTSLVGDNTDWIAIETLARRSLRTVHLADPNLTGLVIGAGGSARAALFALYRLGVKRILLFNRTLANAEKLAREVPPEWNVSVLTSLDEVAQLSADQSPSVVVSNIPAEGSTLDASSRGLIHLPTCMLRNPAGGVVIDMSYKPHYTSLLQLAQQVNTNHELAIGTNATKAPTRKLWAAVPGITILLEQGCHQFHRWTGREAPRAQIEAAAWDVYLQRC</sequence>
<gene>
    <name type="ORF">UMAG_03607</name>
</gene>
<proteinExistence type="inferred from homology"/>
<comment type="function">
    <text evidence="1">The AROM polypeptide catalyzes 5 consecutive enzymatic reactions in prechorismate polyaromatic amino acid biosynthesis.</text>
</comment>
<comment type="catalytic activity">
    <reaction evidence="1">
        <text>7-phospho-2-dehydro-3-deoxy-D-arabino-heptonate = 3-dehydroquinate + phosphate</text>
        <dbReference type="Rhea" id="RHEA:21968"/>
        <dbReference type="ChEBI" id="CHEBI:32364"/>
        <dbReference type="ChEBI" id="CHEBI:43474"/>
        <dbReference type="ChEBI" id="CHEBI:58394"/>
        <dbReference type="EC" id="4.2.3.4"/>
    </reaction>
</comment>
<comment type="catalytic activity">
    <reaction evidence="1">
        <text>3-dehydroquinate = 3-dehydroshikimate + H2O</text>
        <dbReference type="Rhea" id="RHEA:21096"/>
        <dbReference type="ChEBI" id="CHEBI:15377"/>
        <dbReference type="ChEBI" id="CHEBI:16630"/>
        <dbReference type="ChEBI" id="CHEBI:32364"/>
        <dbReference type="EC" id="4.2.1.10"/>
    </reaction>
</comment>
<comment type="catalytic activity">
    <reaction evidence="1">
        <text>shikimate + NADP(+) = 3-dehydroshikimate + NADPH + H(+)</text>
        <dbReference type="Rhea" id="RHEA:17737"/>
        <dbReference type="ChEBI" id="CHEBI:15378"/>
        <dbReference type="ChEBI" id="CHEBI:16630"/>
        <dbReference type="ChEBI" id="CHEBI:36208"/>
        <dbReference type="ChEBI" id="CHEBI:57783"/>
        <dbReference type="ChEBI" id="CHEBI:58349"/>
        <dbReference type="EC" id="1.1.1.25"/>
    </reaction>
</comment>
<comment type="catalytic activity">
    <reaction evidence="1">
        <text>shikimate + ATP = 3-phosphoshikimate + ADP + H(+)</text>
        <dbReference type="Rhea" id="RHEA:13121"/>
        <dbReference type="ChEBI" id="CHEBI:15378"/>
        <dbReference type="ChEBI" id="CHEBI:30616"/>
        <dbReference type="ChEBI" id="CHEBI:36208"/>
        <dbReference type="ChEBI" id="CHEBI:145989"/>
        <dbReference type="ChEBI" id="CHEBI:456216"/>
        <dbReference type="EC" id="2.7.1.71"/>
    </reaction>
</comment>
<comment type="catalytic activity">
    <reaction evidence="1">
        <text>3-phosphoshikimate + phosphoenolpyruvate = 5-O-(1-carboxyvinyl)-3-phosphoshikimate + phosphate</text>
        <dbReference type="Rhea" id="RHEA:21256"/>
        <dbReference type="ChEBI" id="CHEBI:43474"/>
        <dbReference type="ChEBI" id="CHEBI:57701"/>
        <dbReference type="ChEBI" id="CHEBI:58702"/>
        <dbReference type="ChEBI" id="CHEBI:145989"/>
        <dbReference type="EC" id="2.5.1.19"/>
    </reaction>
</comment>
<comment type="cofactor">
    <cofactor>
        <name>Zn(2+)</name>
        <dbReference type="ChEBI" id="CHEBI:29105"/>
    </cofactor>
    <text>Binds 2 Zn(2+) ions per subunit.</text>
</comment>
<comment type="pathway">
    <text evidence="1">Metabolic intermediate biosynthesis; chorismate biosynthesis; chorismate from D-erythrose 4-phosphate and phosphoenolpyruvate: step 2/7.</text>
</comment>
<comment type="pathway">
    <text evidence="1">Metabolic intermediate biosynthesis; chorismate biosynthesis; chorismate from D-erythrose 4-phosphate and phosphoenolpyruvate: step 3/7.</text>
</comment>
<comment type="pathway">
    <text evidence="1">Metabolic intermediate biosynthesis; chorismate biosynthesis; chorismate from D-erythrose 4-phosphate and phosphoenolpyruvate: step 4/7.</text>
</comment>
<comment type="pathway">
    <text evidence="1">Metabolic intermediate biosynthesis; chorismate biosynthesis; chorismate from D-erythrose 4-phosphate and phosphoenolpyruvate: step 5/7.</text>
</comment>
<comment type="pathway">
    <text evidence="1">Metabolic intermediate biosynthesis; chorismate biosynthesis; chorismate from D-erythrose 4-phosphate and phosphoenolpyruvate: step 6/7.</text>
</comment>
<comment type="subunit">
    <text evidence="1">Homodimer.</text>
</comment>
<comment type="subcellular location">
    <subcellularLocation>
        <location evidence="1">Cytoplasm</location>
    </subcellularLocation>
</comment>
<comment type="similarity">
    <text evidence="1">In the N-terminal section; belongs to the sugar phosphate cyclases superfamily. Dehydroquinate synthase family.</text>
</comment>
<comment type="similarity">
    <text evidence="1">In the 2nd section; belongs to the EPSP synthase family.</text>
</comment>
<comment type="similarity">
    <text evidence="1">In the 3rd section; belongs to the shikimate kinase family.</text>
</comment>
<comment type="similarity">
    <text evidence="1">In the 4th section; belongs to the type-I 3-dehydroquinase family.</text>
</comment>
<comment type="similarity">
    <text evidence="1">In the C-terminal section; belongs to the shikimate dehydrogenase family.</text>
</comment>
<name>ARO1_MYCMD</name>
<feature type="chain" id="PRO_0000406745" description="Pentafunctional AROM polypeptide">
    <location>
        <begin position="1"/>
        <end position="1715"/>
    </location>
</feature>
<feature type="region of interest" description="3-dehydroquinate synthase">
    <location>
        <begin position="1"/>
        <end position="421"/>
    </location>
</feature>
<feature type="region of interest" description="Disordered" evidence="2">
    <location>
        <begin position="1"/>
        <end position="26"/>
    </location>
</feature>
<feature type="region of interest" description="EPSP synthase">
    <location>
        <begin position="434"/>
        <end position="895"/>
    </location>
</feature>
<feature type="region of interest" description="Shikimate kinase">
    <location>
        <begin position="948"/>
        <end position="1165"/>
    </location>
</feature>
<feature type="region of interest" description="3-dehydroquinase">
    <location>
        <begin position="1166"/>
        <end position="1389"/>
    </location>
</feature>
<feature type="region of interest" description="Shikimate dehydrogenase">
    <location>
        <begin position="1402"/>
        <end position="1715"/>
    </location>
</feature>
<feature type="compositionally biased region" description="Polar residues" evidence="2">
    <location>
        <begin position="1"/>
        <end position="17"/>
    </location>
</feature>
<feature type="active site" description="Proton acceptor; for 3-dehydroquinate synthase activity" evidence="1">
    <location>
        <position position="297"/>
    </location>
</feature>
<feature type="active site" description="Proton acceptor; for 3-dehydroquinate synthase activity" evidence="1">
    <location>
        <position position="312"/>
    </location>
</feature>
<feature type="active site" description="For EPSP synthase activity" evidence="1">
    <location>
        <position position="877"/>
    </location>
</feature>
<feature type="active site" description="Proton acceptor; for 3-dehydroquinate dehydratase activity" evidence="1">
    <location>
        <position position="1292"/>
    </location>
</feature>
<feature type="active site" description="Schiff-base intermediate with substrate; for 3-dehydroquinate dehydratase activity" evidence="1">
    <location>
        <position position="1320"/>
    </location>
</feature>
<feature type="binding site" evidence="1">
    <location>
        <begin position="71"/>
        <end position="73"/>
    </location>
    <ligand>
        <name>NAD(+)</name>
        <dbReference type="ChEBI" id="CHEBI:57540"/>
    </ligand>
</feature>
<feature type="binding site" evidence="1">
    <location>
        <begin position="112"/>
        <end position="115"/>
    </location>
    <ligand>
        <name>NAD(+)</name>
        <dbReference type="ChEBI" id="CHEBI:57540"/>
    </ligand>
</feature>
<feature type="binding site" evidence="1">
    <location>
        <begin position="143"/>
        <end position="145"/>
    </location>
    <ligand>
        <name>NAD(+)</name>
        <dbReference type="ChEBI" id="CHEBI:57540"/>
    </ligand>
</feature>
<feature type="binding site" evidence="1">
    <location>
        <position position="148"/>
    </location>
    <ligand>
        <name>NAD(+)</name>
        <dbReference type="ChEBI" id="CHEBI:57540"/>
    </ligand>
</feature>
<feature type="binding site" evidence="1">
    <location>
        <position position="159"/>
    </location>
    <ligand>
        <name>7-phospho-2-dehydro-3-deoxy-D-arabino-heptonate</name>
        <dbReference type="ChEBI" id="CHEBI:58394"/>
    </ligand>
</feature>
<feature type="binding site" evidence="1">
    <location>
        <begin position="168"/>
        <end position="169"/>
    </location>
    <ligand>
        <name>NAD(+)</name>
        <dbReference type="ChEBI" id="CHEBI:57540"/>
    </ligand>
</feature>
<feature type="binding site" evidence="1">
    <location>
        <position position="175"/>
    </location>
    <ligand>
        <name>7-phospho-2-dehydro-3-deoxy-D-arabino-heptonate</name>
        <dbReference type="ChEBI" id="CHEBI:58394"/>
    </ligand>
</feature>
<feature type="binding site" evidence="1">
    <location>
        <position position="181"/>
    </location>
    <ligand>
        <name>7-phospho-2-dehydro-3-deoxy-D-arabino-heptonate</name>
        <dbReference type="ChEBI" id="CHEBI:58394"/>
    </ligand>
</feature>
<feature type="binding site" evidence="1">
    <location>
        <position position="190"/>
    </location>
    <ligand>
        <name>NAD(+)</name>
        <dbReference type="ChEBI" id="CHEBI:57540"/>
    </ligand>
</feature>
<feature type="binding site" evidence="1">
    <location>
        <position position="191"/>
    </location>
    <ligand>
        <name>7-phospho-2-dehydro-3-deoxy-D-arabino-heptonate</name>
        <dbReference type="ChEBI" id="CHEBI:58394"/>
    </ligand>
</feature>
<feature type="binding site" evidence="1">
    <location>
        <begin position="208"/>
        <end position="211"/>
    </location>
    <ligand>
        <name>NAD(+)</name>
        <dbReference type="ChEBI" id="CHEBI:57540"/>
    </ligand>
</feature>
<feature type="binding site" evidence="1">
    <location>
        <position position="219"/>
    </location>
    <ligand>
        <name>NAD(+)</name>
        <dbReference type="ChEBI" id="CHEBI:57540"/>
    </ligand>
</feature>
<feature type="binding site" evidence="1">
    <location>
        <begin position="223"/>
        <end position="226"/>
    </location>
    <ligand>
        <name>7-phospho-2-dehydro-3-deoxy-D-arabino-heptonate</name>
        <dbReference type="ChEBI" id="CHEBI:58394"/>
    </ligand>
</feature>
<feature type="binding site" evidence="1">
    <location>
        <position position="223"/>
    </location>
    <ligand>
        <name>Zn(2+)</name>
        <dbReference type="ChEBI" id="CHEBI:29105"/>
        <note>catalytic</note>
    </ligand>
</feature>
<feature type="binding site" evidence="1">
    <location>
        <position position="287"/>
    </location>
    <ligand>
        <name>7-phospho-2-dehydro-3-deoxy-D-arabino-heptonate</name>
        <dbReference type="ChEBI" id="CHEBI:58394"/>
    </ligand>
</feature>
<feature type="binding site" evidence="1">
    <location>
        <begin position="301"/>
        <end position="305"/>
    </location>
    <ligand>
        <name>7-phospho-2-dehydro-3-deoxy-D-arabino-heptonate</name>
        <dbReference type="ChEBI" id="CHEBI:58394"/>
    </ligand>
</feature>
<feature type="binding site" evidence="1">
    <location>
        <position position="308"/>
    </location>
    <ligand>
        <name>7-phospho-2-dehydro-3-deoxy-D-arabino-heptonate</name>
        <dbReference type="ChEBI" id="CHEBI:58394"/>
    </ligand>
</feature>
<feature type="binding site" evidence="1">
    <location>
        <position position="308"/>
    </location>
    <ligand>
        <name>Zn(2+)</name>
        <dbReference type="ChEBI" id="CHEBI:29105"/>
        <note>catalytic</note>
    </ligand>
</feature>
<feature type="binding site" evidence="1">
    <location>
        <position position="324"/>
    </location>
    <ligand>
        <name>7-phospho-2-dehydro-3-deoxy-D-arabino-heptonate</name>
        <dbReference type="ChEBI" id="CHEBI:58394"/>
    </ligand>
</feature>
<feature type="binding site" evidence="1">
    <location>
        <position position="324"/>
    </location>
    <ligand>
        <name>Zn(2+)</name>
        <dbReference type="ChEBI" id="CHEBI:29105"/>
        <note>catalytic</note>
    </ligand>
</feature>
<feature type="binding site" evidence="1">
    <location>
        <position position="393"/>
    </location>
    <ligand>
        <name>7-phospho-2-dehydro-3-deoxy-D-arabino-heptonate</name>
        <dbReference type="ChEBI" id="CHEBI:58394"/>
    </ligand>
</feature>
<feature type="binding site" evidence="1">
    <location>
        <begin position="955"/>
        <end position="962"/>
    </location>
    <ligand>
        <name>ATP</name>
        <dbReference type="ChEBI" id="CHEBI:30616"/>
    </ligand>
</feature>